<evidence type="ECO:0000250" key="1">
    <source>
        <dbReference type="UniProtKB" id="P27635"/>
    </source>
</evidence>
<evidence type="ECO:0000250" key="2">
    <source>
        <dbReference type="UniProtKB" id="Q6ZWV3"/>
    </source>
</evidence>
<evidence type="ECO:0000305" key="3"/>
<dbReference type="EMBL" id="AY735455">
    <property type="protein sequence ID" value="AAV85773.1"/>
    <property type="molecule type" value="mRNA"/>
</dbReference>
<dbReference type="EMBL" id="F14723">
    <property type="protein sequence ID" value="CAA23208.1"/>
    <property type="status" value="ALT_INIT"/>
    <property type="molecule type" value="mRNA"/>
</dbReference>
<dbReference type="EMBL" id="F14513">
    <property type="protein sequence ID" value="CAA23099.1"/>
    <property type="molecule type" value="mRNA"/>
</dbReference>
<dbReference type="RefSeq" id="NP_001038008.1">
    <property type="nucleotide sequence ID" value="NM_001044543.1"/>
</dbReference>
<dbReference type="PDB" id="3J7O">
    <property type="method" value="EM"/>
    <property type="resolution" value="3.40 A"/>
    <property type="chains" value="I=2-214"/>
</dbReference>
<dbReference type="PDB" id="3J7P">
    <property type="method" value="EM"/>
    <property type="resolution" value="3.50 A"/>
    <property type="chains" value="I=2-214"/>
</dbReference>
<dbReference type="PDB" id="3J7Q">
    <property type="method" value="EM"/>
    <property type="resolution" value="3.50 A"/>
    <property type="chains" value="I=2-214"/>
</dbReference>
<dbReference type="PDB" id="3J7R">
    <property type="method" value="EM"/>
    <property type="resolution" value="3.90 A"/>
    <property type="chains" value="I=2-214"/>
</dbReference>
<dbReference type="PDBsum" id="3J7O"/>
<dbReference type="PDBsum" id="3J7P"/>
<dbReference type="PDBsum" id="3J7Q"/>
<dbReference type="PDBsum" id="3J7R"/>
<dbReference type="SMR" id="Q29195"/>
<dbReference type="FunCoup" id="Q29195">
    <property type="interactions" value="1185"/>
</dbReference>
<dbReference type="STRING" id="9823.ENSSSCP00000035267"/>
<dbReference type="PaxDb" id="9823-ENSSSCP00000005379"/>
<dbReference type="PeptideAtlas" id="Q29195"/>
<dbReference type="Ensembl" id="ENSSSCT00030018037.1">
    <property type="protein sequence ID" value="ENSSSCP00030008010.1"/>
    <property type="gene ID" value="ENSSSCG00030013154.1"/>
</dbReference>
<dbReference type="Ensembl" id="ENSSSCT00035065804.1">
    <property type="protein sequence ID" value="ENSSSCP00035026695.1"/>
    <property type="gene ID" value="ENSSSCG00035049337.1"/>
</dbReference>
<dbReference type="Ensembl" id="ENSSSCT00040075181.1">
    <property type="protein sequence ID" value="ENSSSCP00040032264.1"/>
    <property type="gene ID" value="ENSSSCG00040055315.1"/>
</dbReference>
<dbReference type="Ensembl" id="ENSSSCT00060048811.1">
    <property type="protein sequence ID" value="ENSSSCP00060020889.1"/>
    <property type="gene ID" value="ENSSSCG00060035998.1"/>
</dbReference>
<dbReference type="Ensembl" id="ENSSSCT00065015009.1">
    <property type="protein sequence ID" value="ENSSSCP00065006120.1"/>
    <property type="gene ID" value="ENSSSCG00065011221.1"/>
</dbReference>
<dbReference type="GeneID" id="733593"/>
<dbReference type="KEGG" id="ssc:733593"/>
<dbReference type="CTD" id="6134"/>
<dbReference type="eggNOG" id="KOG0857">
    <property type="taxonomic scope" value="Eukaryota"/>
</dbReference>
<dbReference type="InParanoid" id="Q29195"/>
<dbReference type="OMA" id="HHVIREN"/>
<dbReference type="OrthoDB" id="9689372at2759"/>
<dbReference type="Reactome" id="R-SSC-156827">
    <property type="pathway name" value="L13a-mediated translational silencing of Ceruloplasmin expression"/>
</dbReference>
<dbReference type="Reactome" id="R-SSC-1799339">
    <property type="pathway name" value="SRP-dependent cotranslational protein targeting to membrane"/>
</dbReference>
<dbReference type="Reactome" id="R-SSC-6791226">
    <property type="pathway name" value="Major pathway of rRNA processing in the nucleolus and cytosol"/>
</dbReference>
<dbReference type="Reactome" id="R-SSC-72689">
    <property type="pathway name" value="Formation of a pool of free 40S subunits"/>
</dbReference>
<dbReference type="Reactome" id="R-SSC-72706">
    <property type="pathway name" value="GTP hydrolysis and joining of the 60S ribosomal subunit"/>
</dbReference>
<dbReference type="Reactome" id="R-SSC-975956">
    <property type="pathway name" value="Nonsense Mediated Decay (NMD) independent of the Exon Junction Complex (EJC)"/>
</dbReference>
<dbReference type="Reactome" id="R-SSC-975957">
    <property type="pathway name" value="Nonsense Mediated Decay (NMD) enhanced by the Exon Junction Complex (EJC)"/>
</dbReference>
<dbReference type="Proteomes" id="UP000008227">
    <property type="component" value="Unplaced"/>
</dbReference>
<dbReference type="Proteomes" id="UP000314985">
    <property type="component" value="Unplaced"/>
</dbReference>
<dbReference type="Proteomes" id="UP000694570">
    <property type="component" value="Unplaced"/>
</dbReference>
<dbReference type="Proteomes" id="UP000694571">
    <property type="component" value="Unplaced"/>
</dbReference>
<dbReference type="Proteomes" id="UP000694720">
    <property type="component" value="Unplaced"/>
</dbReference>
<dbReference type="Proteomes" id="UP000694722">
    <property type="component" value="Unplaced"/>
</dbReference>
<dbReference type="Proteomes" id="UP000694723">
    <property type="component" value="Unplaced"/>
</dbReference>
<dbReference type="Proteomes" id="UP000694724">
    <property type="component" value="Unplaced"/>
</dbReference>
<dbReference type="Proteomes" id="UP000694725">
    <property type="component" value="Unplaced"/>
</dbReference>
<dbReference type="Proteomes" id="UP000694726">
    <property type="component" value="Unplaced"/>
</dbReference>
<dbReference type="Proteomes" id="UP000694727">
    <property type="component" value="Unplaced"/>
</dbReference>
<dbReference type="Proteomes" id="UP000694728">
    <property type="component" value="Unplaced"/>
</dbReference>
<dbReference type="Bgee" id="ENSSSCG00000035997">
    <property type="expression patterns" value="Expressed in granulosa cell and 41 other cell types or tissues"/>
</dbReference>
<dbReference type="ExpressionAtlas" id="Q29195">
    <property type="expression patterns" value="baseline and differential"/>
</dbReference>
<dbReference type="GO" id="GO:0098556">
    <property type="term" value="C:cytoplasmic side of rough endoplasmic reticulum membrane"/>
    <property type="evidence" value="ECO:0000314"/>
    <property type="project" value="UniProtKB"/>
</dbReference>
<dbReference type="GO" id="GO:0022625">
    <property type="term" value="C:cytosolic large ribosomal subunit"/>
    <property type="evidence" value="ECO:0000250"/>
    <property type="project" value="UniProtKB"/>
</dbReference>
<dbReference type="GO" id="GO:0015934">
    <property type="term" value="C:large ribosomal subunit"/>
    <property type="evidence" value="ECO:0000314"/>
    <property type="project" value="UniProtKB"/>
</dbReference>
<dbReference type="GO" id="GO:0003735">
    <property type="term" value="F:structural constituent of ribosome"/>
    <property type="evidence" value="ECO:0000250"/>
    <property type="project" value="UniProtKB"/>
</dbReference>
<dbReference type="GO" id="GO:0045182">
    <property type="term" value="F:translation regulator activity"/>
    <property type="evidence" value="ECO:0000250"/>
    <property type="project" value="UniProtKB"/>
</dbReference>
<dbReference type="GO" id="GO:1990403">
    <property type="term" value="P:embryonic brain development"/>
    <property type="evidence" value="ECO:0000250"/>
    <property type="project" value="UniProtKB"/>
</dbReference>
<dbReference type="GO" id="GO:0006417">
    <property type="term" value="P:regulation of translation"/>
    <property type="evidence" value="ECO:0000250"/>
    <property type="project" value="UniProtKB"/>
</dbReference>
<dbReference type="GO" id="GO:0006412">
    <property type="term" value="P:translation"/>
    <property type="evidence" value="ECO:0000318"/>
    <property type="project" value="GO_Central"/>
</dbReference>
<dbReference type="CDD" id="cd01433">
    <property type="entry name" value="Ribosomal_L16_L10e"/>
    <property type="match status" value="1"/>
</dbReference>
<dbReference type="FunFam" id="3.30.60.300:FF:000001">
    <property type="entry name" value="60S ribosomal protein L10"/>
    <property type="match status" value="1"/>
</dbReference>
<dbReference type="FunFam" id="3.90.1170.10:FF:000002">
    <property type="entry name" value="60S ribosomal protein L10"/>
    <property type="match status" value="1"/>
</dbReference>
<dbReference type="Gene3D" id="3.30.60.300">
    <property type="match status" value="1"/>
</dbReference>
<dbReference type="Gene3D" id="3.90.1170.10">
    <property type="entry name" value="Ribosomal protein L10e/L16"/>
    <property type="match status" value="1"/>
</dbReference>
<dbReference type="InterPro" id="IPR047873">
    <property type="entry name" value="Ribosomal_uL16"/>
</dbReference>
<dbReference type="InterPro" id="IPR018255">
    <property type="entry name" value="Ribosomal_uL16_CS_euk_arc"/>
</dbReference>
<dbReference type="InterPro" id="IPR016180">
    <property type="entry name" value="Ribosomal_uL16_dom"/>
</dbReference>
<dbReference type="InterPro" id="IPR001197">
    <property type="entry name" value="Ribosomal_uL16_euk_arch"/>
</dbReference>
<dbReference type="InterPro" id="IPR036920">
    <property type="entry name" value="Ribosomal_uL16_sf"/>
</dbReference>
<dbReference type="NCBIfam" id="NF003239">
    <property type="entry name" value="PRK04199.1-4"/>
    <property type="match status" value="1"/>
</dbReference>
<dbReference type="NCBIfam" id="TIGR00279">
    <property type="entry name" value="uL16_euk_arch"/>
    <property type="match status" value="1"/>
</dbReference>
<dbReference type="PANTHER" id="PTHR11726">
    <property type="entry name" value="60S RIBOSOMAL PROTEIN L10"/>
    <property type="match status" value="1"/>
</dbReference>
<dbReference type="Pfam" id="PF00252">
    <property type="entry name" value="Ribosomal_L16"/>
    <property type="match status" value="1"/>
</dbReference>
<dbReference type="PIRSF" id="PIRSF005590">
    <property type="entry name" value="Ribosomal_L10"/>
    <property type="match status" value="1"/>
</dbReference>
<dbReference type="SUPFAM" id="SSF54686">
    <property type="entry name" value="Ribosomal protein L16p/L10e"/>
    <property type="match status" value="1"/>
</dbReference>
<dbReference type="PROSITE" id="PS01257">
    <property type="entry name" value="RIBOSOMAL_L10E"/>
    <property type="match status" value="1"/>
</dbReference>
<protein>
    <recommendedName>
        <fullName evidence="3">Large ribosomal subunit protein uL16</fullName>
    </recommendedName>
    <alternativeName>
        <fullName evidence="3">60S ribosomal protein L10</fullName>
    </alternativeName>
    <alternativeName>
        <fullName>Protein QM homolog</fullName>
    </alternativeName>
    <alternativeName>
        <fullName evidence="1">Ribosomal protein L10</fullName>
    </alternativeName>
</protein>
<sequence length="214" mass="24603">MGRRPARCYRYCKNKPYPKSRFCRGVPDAKIRIFDLGRKKAKVDEFPLCGHMVSDEYEQLSSEALEAARICANKYMVKSCGKDGFHIRVRLHPFHVIRINKMLSCAGADRLQTGMRGAFGKPQGTVARVHIGQVIMSIRTKLQNKEHVIEALRRAKFKFPGRQKIHISKKWGFTKFNADEFENMVAEKRLIPDGCGVKYIPNRGPLDKWRALHS</sequence>
<accession>Q29195</accession>
<accession>Q29322</accession>
<accession>Q2YGT8</accession>
<gene>
    <name evidence="1" type="primary">RPL10</name>
    <name type="synonym">QM</name>
</gene>
<organism>
    <name type="scientific">Sus scrofa</name>
    <name type="common">Pig</name>
    <dbReference type="NCBI Taxonomy" id="9823"/>
    <lineage>
        <taxon>Eukaryota</taxon>
        <taxon>Metazoa</taxon>
        <taxon>Chordata</taxon>
        <taxon>Craniata</taxon>
        <taxon>Vertebrata</taxon>
        <taxon>Euteleostomi</taxon>
        <taxon>Mammalia</taxon>
        <taxon>Eutheria</taxon>
        <taxon>Laurasiatheria</taxon>
        <taxon>Artiodactyla</taxon>
        <taxon>Suina</taxon>
        <taxon>Suidae</taxon>
        <taxon>Sus</taxon>
    </lineage>
</organism>
<reference key="1">
    <citation type="submission" date="2004-08" db="EMBL/GenBank/DDBJ databases">
        <title>Full-length cDNA, molecular characterization, and physical mapping of porcine RPL6, RPL7 and RPL10.</title>
        <authorList>
            <person name="Wang H.L."/>
            <person name="Zhu Z.M."/>
            <person name="Wu X."/>
            <person name="Wang H."/>
            <person name="Yu M."/>
            <person name="Zhao S.H."/>
            <person name="Yang S.L."/>
            <person name="Li K."/>
        </authorList>
    </citation>
    <scope>NUCLEOTIDE SEQUENCE [MRNA]</scope>
</reference>
<reference key="2">
    <citation type="journal article" date="1996" name="Mamm. Genome">
        <title>Evaluation and characterization of a porcine small intestine cDNA library: analysis of 839 clones.</title>
        <authorList>
            <person name="Winteroe A.K."/>
            <person name="Fredholm M."/>
            <person name="Davies W."/>
        </authorList>
    </citation>
    <scope>NUCLEOTIDE SEQUENCE [LARGE SCALE MRNA] OF 1-71 AND 101-213</scope>
    <source>
        <tissue>Small intestine</tissue>
    </source>
</reference>
<comment type="function">
    <text evidence="1">Component of the large ribosomal subunit. Plays a role in the formation of actively translating ribosomes. May play a role in the embryonic brain development.</text>
</comment>
<comment type="subunit">
    <text evidence="1">Component of the large ribosomal subunit. Mature ribosomes consist of a small (40S) and a large (60S) subunit. The 40S subunit contains about 33 different proteins and 1 molecule of RNA (18S). The 60S subunit contains about 49 different proteins and 3 molecules of RNA (28S, 5.8S and 5S).</text>
</comment>
<comment type="subcellular location">
    <subcellularLocation>
        <location evidence="2">Cytoplasm</location>
    </subcellularLocation>
</comment>
<comment type="PTM">
    <text evidence="2">Citrullinated by PADI4.</text>
</comment>
<comment type="PTM">
    <text evidence="2">Ufmylated by UFL1.</text>
</comment>
<comment type="similarity">
    <text evidence="3">Belongs to the universal ribosomal protein uL16 family.</text>
</comment>
<comment type="sequence caution" evidence="3">
    <conflict type="erroneous initiation">
        <sequence resource="EMBL-CDS" id="CAA23208"/>
    </conflict>
</comment>
<keyword id="KW-0002">3D-structure</keyword>
<keyword id="KW-0164">Citrullination</keyword>
<keyword id="KW-0963">Cytoplasm</keyword>
<keyword id="KW-0217">Developmental protein</keyword>
<keyword id="KW-1017">Isopeptide bond</keyword>
<keyword id="KW-1185">Reference proteome</keyword>
<keyword id="KW-0687">Ribonucleoprotein</keyword>
<keyword id="KW-0689">Ribosomal protein</keyword>
<keyword id="KW-0832">Ubl conjugation</keyword>
<feature type="chain" id="PRO_0000147108" description="Large ribosomal subunit protein uL16">
    <location>
        <begin position="1"/>
        <end position="214"/>
    </location>
</feature>
<feature type="modified residue" description="Citrulline" evidence="2">
    <location>
        <position position="32"/>
    </location>
</feature>
<feature type="cross-link" description="Glycyl lysine isopeptide (Lys-Gly) (interchain with G-Cter in SUMO2)" evidence="1">
    <location>
        <position position="175"/>
    </location>
</feature>
<feature type="cross-link" description="Glycyl lysine isopeptide (Lys-Gly) (interchain with G-Cter in ubiquitin)" evidence="1">
    <location>
        <position position="188"/>
    </location>
</feature>
<feature type="sequence conflict" description="In Ref. 2; CAA23099." evidence="3" ref="2">
    <original>QTGM</original>
    <variation>PTRH</variation>
    <location>
        <begin position="112"/>
        <end position="115"/>
    </location>
</feature>
<name>RL10_PIG</name>
<proteinExistence type="evidence at protein level"/>